<gene>
    <name evidence="1" type="primary">rpmJ</name>
    <name type="ordered locus">YPDSF_2770</name>
</gene>
<organism>
    <name type="scientific">Yersinia pestis (strain Pestoides F)</name>
    <dbReference type="NCBI Taxonomy" id="386656"/>
    <lineage>
        <taxon>Bacteria</taxon>
        <taxon>Pseudomonadati</taxon>
        <taxon>Pseudomonadota</taxon>
        <taxon>Gammaproteobacteria</taxon>
        <taxon>Enterobacterales</taxon>
        <taxon>Yersiniaceae</taxon>
        <taxon>Yersinia</taxon>
    </lineage>
</organism>
<proteinExistence type="inferred from homology"/>
<comment type="similarity">
    <text evidence="1">Belongs to the bacterial ribosomal protein bL36 family.</text>
</comment>
<reference key="1">
    <citation type="submission" date="2007-02" db="EMBL/GenBank/DDBJ databases">
        <title>Complete sequence of chromosome of Yersinia pestis Pestoides F.</title>
        <authorList>
            <consortium name="US DOE Joint Genome Institute"/>
            <person name="Copeland A."/>
            <person name="Lucas S."/>
            <person name="Lapidus A."/>
            <person name="Barry K."/>
            <person name="Detter J.C."/>
            <person name="Glavina del Rio T."/>
            <person name="Hammon N."/>
            <person name="Israni S."/>
            <person name="Dalin E."/>
            <person name="Tice H."/>
            <person name="Pitluck S."/>
            <person name="Di Bartolo G."/>
            <person name="Chain P."/>
            <person name="Malfatti S."/>
            <person name="Shin M."/>
            <person name="Vergez L."/>
            <person name="Schmutz J."/>
            <person name="Larimer F."/>
            <person name="Land M."/>
            <person name="Hauser L."/>
            <person name="Worsham P."/>
            <person name="Chu M."/>
            <person name="Bearden S."/>
            <person name="Garcia E."/>
            <person name="Richardson P."/>
        </authorList>
    </citation>
    <scope>NUCLEOTIDE SEQUENCE [LARGE SCALE GENOMIC DNA]</scope>
    <source>
        <strain>Pestoides F</strain>
    </source>
</reference>
<accession>A4TPC0</accession>
<feature type="chain" id="PRO_0000302337" description="Large ribosomal subunit protein bL36">
    <location>
        <begin position="1"/>
        <end position="47"/>
    </location>
</feature>
<keyword id="KW-0687">Ribonucleoprotein</keyword>
<keyword id="KW-0689">Ribosomal protein</keyword>
<dbReference type="EMBL" id="CP000668">
    <property type="protein sequence ID" value="ABP41132.1"/>
    <property type="molecule type" value="Genomic_DNA"/>
</dbReference>
<dbReference type="SMR" id="A4TPC0"/>
<dbReference type="KEGG" id="ypp:YPDSF_2770"/>
<dbReference type="PATRIC" id="fig|386656.14.peg.27"/>
<dbReference type="GO" id="GO:1990904">
    <property type="term" value="C:ribonucleoprotein complex"/>
    <property type="evidence" value="ECO:0007669"/>
    <property type="project" value="UniProtKB-KW"/>
</dbReference>
<dbReference type="GO" id="GO:0005840">
    <property type="term" value="C:ribosome"/>
    <property type="evidence" value="ECO:0007669"/>
    <property type="project" value="UniProtKB-KW"/>
</dbReference>
<dbReference type="GO" id="GO:0003735">
    <property type="term" value="F:structural constituent of ribosome"/>
    <property type="evidence" value="ECO:0007669"/>
    <property type="project" value="InterPro"/>
</dbReference>
<dbReference type="GO" id="GO:0006412">
    <property type="term" value="P:translation"/>
    <property type="evidence" value="ECO:0007669"/>
    <property type="project" value="UniProtKB-UniRule"/>
</dbReference>
<dbReference type="HAMAP" id="MF_00251">
    <property type="entry name" value="Ribosomal_bL36"/>
    <property type="match status" value="1"/>
</dbReference>
<dbReference type="InterPro" id="IPR000473">
    <property type="entry name" value="Ribosomal_bL36"/>
</dbReference>
<dbReference type="InterPro" id="IPR035977">
    <property type="entry name" value="Ribosomal_bL36_sp"/>
</dbReference>
<dbReference type="InterPro" id="IPR047621">
    <property type="entry name" value="Ribosomal_L36_bact"/>
</dbReference>
<dbReference type="NCBIfam" id="NF002021">
    <property type="entry name" value="PRK00831.1"/>
    <property type="match status" value="1"/>
</dbReference>
<dbReference type="NCBIfam" id="TIGR01022">
    <property type="entry name" value="rpmJ_bact"/>
    <property type="match status" value="1"/>
</dbReference>
<dbReference type="PANTHER" id="PTHR47781">
    <property type="entry name" value="50S RIBOSOMAL PROTEIN L36 2"/>
    <property type="match status" value="1"/>
</dbReference>
<dbReference type="PANTHER" id="PTHR47781:SF1">
    <property type="entry name" value="LARGE RIBOSOMAL SUBUNIT PROTEIN BL36B"/>
    <property type="match status" value="1"/>
</dbReference>
<dbReference type="Pfam" id="PF00444">
    <property type="entry name" value="Ribosomal_L36"/>
    <property type="match status" value="1"/>
</dbReference>
<dbReference type="SUPFAM" id="SSF57840">
    <property type="entry name" value="Ribosomal protein L36"/>
    <property type="match status" value="1"/>
</dbReference>
<dbReference type="PROSITE" id="PS00828">
    <property type="entry name" value="RIBOSOMAL_L36"/>
    <property type="match status" value="1"/>
</dbReference>
<evidence type="ECO:0000255" key="1">
    <source>
        <dbReference type="HAMAP-Rule" id="MF_00251"/>
    </source>
</evidence>
<evidence type="ECO:0000305" key="2"/>
<name>RL36_YERPP</name>
<protein>
    <recommendedName>
        <fullName evidence="1">Large ribosomal subunit protein bL36</fullName>
    </recommendedName>
    <alternativeName>
        <fullName evidence="2">50S ribosomal protein L36</fullName>
    </alternativeName>
</protein>
<sequence length="47" mass="5463">MQVLSSLRSAKNRHPDCKIVRRRGRVYVICKSNPRFKAVQGGTHKKR</sequence>